<evidence type="ECO:0000255" key="1">
    <source>
        <dbReference type="HAMAP-Rule" id="MF_00336"/>
    </source>
</evidence>
<gene>
    <name evidence="1" type="primary">bioD</name>
    <name type="ordered locus">RER_35030</name>
</gene>
<comment type="function">
    <text evidence="1">Catalyzes a mechanistically unusual reaction, the ATP-dependent insertion of CO2 between the N7 and N8 nitrogen atoms of 7,8-diaminopelargonic acid (DAPA, also called 7,8-diammoniononanoate) to form a ureido ring.</text>
</comment>
<comment type="catalytic activity">
    <reaction evidence="1">
        <text>(7R,8S)-7,8-diammoniononanoate + CO2 + ATP = (4R,5S)-dethiobiotin + ADP + phosphate + 3 H(+)</text>
        <dbReference type="Rhea" id="RHEA:15805"/>
        <dbReference type="ChEBI" id="CHEBI:15378"/>
        <dbReference type="ChEBI" id="CHEBI:16526"/>
        <dbReference type="ChEBI" id="CHEBI:30616"/>
        <dbReference type="ChEBI" id="CHEBI:43474"/>
        <dbReference type="ChEBI" id="CHEBI:149469"/>
        <dbReference type="ChEBI" id="CHEBI:149473"/>
        <dbReference type="ChEBI" id="CHEBI:456216"/>
        <dbReference type="EC" id="6.3.3.3"/>
    </reaction>
</comment>
<comment type="cofactor">
    <cofactor evidence="1">
        <name>Mg(2+)</name>
        <dbReference type="ChEBI" id="CHEBI:18420"/>
    </cofactor>
</comment>
<comment type="pathway">
    <text evidence="1">Cofactor biosynthesis; biotin biosynthesis; biotin from 7,8-diaminononanoate: step 1/2.</text>
</comment>
<comment type="subunit">
    <text evidence="1">Homodimer.</text>
</comment>
<comment type="subcellular location">
    <subcellularLocation>
        <location evidence="1">Cytoplasm</location>
    </subcellularLocation>
</comment>
<comment type="similarity">
    <text evidence="1">Belongs to the dethiobiotin synthetase family.</text>
</comment>
<accession>C1A0S6</accession>
<name>BIOD_RHOE4</name>
<keyword id="KW-0067">ATP-binding</keyword>
<keyword id="KW-0093">Biotin biosynthesis</keyword>
<keyword id="KW-0963">Cytoplasm</keyword>
<keyword id="KW-0436">Ligase</keyword>
<keyword id="KW-0460">Magnesium</keyword>
<keyword id="KW-0479">Metal-binding</keyword>
<keyword id="KW-0547">Nucleotide-binding</keyword>
<organism>
    <name type="scientific">Rhodococcus erythropolis (strain PR4 / NBRC 100887)</name>
    <dbReference type="NCBI Taxonomy" id="234621"/>
    <lineage>
        <taxon>Bacteria</taxon>
        <taxon>Bacillati</taxon>
        <taxon>Actinomycetota</taxon>
        <taxon>Actinomycetes</taxon>
        <taxon>Mycobacteriales</taxon>
        <taxon>Nocardiaceae</taxon>
        <taxon>Rhodococcus</taxon>
        <taxon>Rhodococcus erythropolis group</taxon>
    </lineage>
</organism>
<dbReference type="EC" id="6.3.3.3" evidence="1"/>
<dbReference type="EMBL" id="AP008957">
    <property type="protein sequence ID" value="BAH34211.1"/>
    <property type="molecule type" value="Genomic_DNA"/>
</dbReference>
<dbReference type="RefSeq" id="WP_020908046.1">
    <property type="nucleotide sequence ID" value="NC_012490.1"/>
</dbReference>
<dbReference type="SMR" id="C1A0S6"/>
<dbReference type="GeneID" id="57486599"/>
<dbReference type="KEGG" id="rer:RER_35030"/>
<dbReference type="eggNOG" id="COG0132">
    <property type="taxonomic scope" value="Bacteria"/>
</dbReference>
<dbReference type="HOGENOM" id="CLU_072551_1_0_11"/>
<dbReference type="UniPathway" id="UPA00078">
    <property type="reaction ID" value="UER00161"/>
</dbReference>
<dbReference type="Proteomes" id="UP000002204">
    <property type="component" value="Chromosome"/>
</dbReference>
<dbReference type="GO" id="GO:0005829">
    <property type="term" value="C:cytosol"/>
    <property type="evidence" value="ECO:0007669"/>
    <property type="project" value="TreeGrafter"/>
</dbReference>
<dbReference type="GO" id="GO:0005524">
    <property type="term" value="F:ATP binding"/>
    <property type="evidence" value="ECO:0007669"/>
    <property type="project" value="UniProtKB-UniRule"/>
</dbReference>
<dbReference type="GO" id="GO:0004141">
    <property type="term" value="F:dethiobiotin synthase activity"/>
    <property type="evidence" value="ECO:0007669"/>
    <property type="project" value="UniProtKB-UniRule"/>
</dbReference>
<dbReference type="GO" id="GO:0000287">
    <property type="term" value="F:magnesium ion binding"/>
    <property type="evidence" value="ECO:0007669"/>
    <property type="project" value="UniProtKB-UniRule"/>
</dbReference>
<dbReference type="GO" id="GO:0009102">
    <property type="term" value="P:biotin biosynthetic process"/>
    <property type="evidence" value="ECO:0007669"/>
    <property type="project" value="UniProtKB-UniRule"/>
</dbReference>
<dbReference type="CDD" id="cd03109">
    <property type="entry name" value="DTBS"/>
    <property type="match status" value="1"/>
</dbReference>
<dbReference type="Gene3D" id="3.40.50.300">
    <property type="entry name" value="P-loop containing nucleotide triphosphate hydrolases"/>
    <property type="match status" value="1"/>
</dbReference>
<dbReference type="HAMAP" id="MF_00336">
    <property type="entry name" value="BioD"/>
    <property type="match status" value="1"/>
</dbReference>
<dbReference type="InterPro" id="IPR004472">
    <property type="entry name" value="DTB_synth_BioD"/>
</dbReference>
<dbReference type="InterPro" id="IPR027417">
    <property type="entry name" value="P-loop_NTPase"/>
</dbReference>
<dbReference type="NCBIfam" id="TIGR00347">
    <property type="entry name" value="bioD"/>
    <property type="match status" value="1"/>
</dbReference>
<dbReference type="PANTHER" id="PTHR43210">
    <property type="entry name" value="DETHIOBIOTIN SYNTHETASE"/>
    <property type="match status" value="1"/>
</dbReference>
<dbReference type="PANTHER" id="PTHR43210:SF5">
    <property type="entry name" value="DETHIOBIOTIN SYNTHETASE"/>
    <property type="match status" value="1"/>
</dbReference>
<dbReference type="Pfam" id="PF13500">
    <property type="entry name" value="AAA_26"/>
    <property type="match status" value="1"/>
</dbReference>
<dbReference type="PIRSF" id="PIRSF006755">
    <property type="entry name" value="DTB_synth"/>
    <property type="match status" value="1"/>
</dbReference>
<dbReference type="SUPFAM" id="SSF52540">
    <property type="entry name" value="P-loop containing nucleoside triphosphate hydrolases"/>
    <property type="match status" value="1"/>
</dbReference>
<sequence length="227" mass="22840">MSIFLVTGTSTDVGKTVVTAALASVALQSGKSVAVLKPAQTGVDVDGAGDLAEIERLTGGGVTLVELARYPEPLAPDTAARRSGLPLLALDDVVRVARDLDTTHDLTLIEGAGGLLVRLGVDGFTARDLAAALAAPVVLVVASGLGTLNHTALTVEALGASGVECAGLVIGSWPQEPDLAERCNREDLVSVSGVPLLGLMPAGSGSESVQEFAQTAWGALGKSPLAI</sequence>
<reference key="1">
    <citation type="submission" date="2005-03" db="EMBL/GenBank/DDBJ databases">
        <title>Comparison of the complete genome sequences of Rhodococcus erythropolis PR4 and Rhodococcus opacus B4.</title>
        <authorList>
            <person name="Takarada H."/>
            <person name="Sekine M."/>
            <person name="Hosoyama A."/>
            <person name="Yamada R."/>
            <person name="Fujisawa T."/>
            <person name="Omata S."/>
            <person name="Shimizu A."/>
            <person name="Tsukatani N."/>
            <person name="Tanikawa S."/>
            <person name="Fujita N."/>
            <person name="Harayama S."/>
        </authorList>
    </citation>
    <scope>NUCLEOTIDE SEQUENCE [LARGE SCALE GENOMIC DNA]</scope>
    <source>
        <strain>PR4 / NBRC 100887</strain>
    </source>
</reference>
<proteinExistence type="inferred from homology"/>
<protein>
    <recommendedName>
        <fullName evidence="1">ATP-dependent dethiobiotin synthetase BioD</fullName>
        <ecNumber evidence="1">6.3.3.3</ecNumber>
    </recommendedName>
    <alternativeName>
        <fullName evidence="1">DTB synthetase</fullName>
        <shortName evidence="1">DTBS</shortName>
    </alternativeName>
    <alternativeName>
        <fullName evidence="1">Dethiobiotin synthase</fullName>
    </alternativeName>
</protein>
<feature type="chain" id="PRO_1000205213" description="ATP-dependent dethiobiotin synthetase BioD">
    <location>
        <begin position="1"/>
        <end position="227"/>
    </location>
</feature>
<feature type="active site" evidence="1">
    <location>
        <position position="37"/>
    </location>
</feature>
<feature type="binding site" evidence="1">
    <location>
        <begin position="12"/>
        <end position="17"/>
    </location>
    <ligand>
        <name>ATP</name>
        <dbReference type="ChEBI" id="CHEBI:30616"/>
    </ligand>
</feature>
<feature type="binding site" evidence="1">
    <location>
        <position position="16"/>
    </location>
    <ligand>
        <name>Mg(2+)</name>
        <dbReference type="ChEBI" id="CHEBI:18420"/>
    </ligand>
</feature>
<feature type="binding site" evidence="1">
    <location>
        <position position="41"/>
    </location>
    <ligand>
        <name>substrate</name>
    </ligand>
</feature>
<feature type="binding site" evidence="1">
    <location>
        <position position="50"/>
    </location>
    <ligand>
        <name>ATP</name>
        <dbReference type="ChEBI" id="CHEBI:30616"/>
    </ligand>
</feature>
<feature type="binding site" evidence="1">
    <location>
        <position position="50"/>
    </location>
    <ligand>
        <name>Mg(2+)</name>
        <dbReference type="ChEBI" id="CHEBI:18420"/>
    </ligand>
</feature>
<feature type="binding site" evidence="1">
    <location>
        <begin position="110"/>
        <end position="113"/>
    </location>
    <ligand>
        <name>ATP</name>
        <dbReference type="ChEBI" id="CHEBI:30616"/>
    </ligand>
</feature>
<feature type="binding site" evidence="1">
    <location>
        <position position="110"/>
    </location>
    <ligand>
        <name>Mg(2+)</name>
        <dbReference type="ChEBI" id="CHEBI:18420"/>
    </ligand>
</feature>
<feature type="binding site" evidence="1">
    <location>
        <begin position="171"/>
        <end position="172"/>
    </location>
    <ligand>
        <name>ATP</name>
        <dbReference type="ChEBI" id="CHEBI:30616"/>
    </ligand>
</feature>
<feature type="binding site" evidence="1">
    <location>
        <begin position="201"/>
        <end position="203"/>
    </location>
    <ligand>
        <name>ATP</name>
        <dbReference type="ChEBI" id="CHEBI:30616"/>
    </ligand>
</feature>